<name>PNC1_ARATH</name>
<reference key="1">
    <citation type="journal article" date="2000" name="Nature">
        <title>Sequence and analysis of chromosome 3 of the plant Arabidopsis thaliana.</title>
        <authorList>
            <person name="Salanoubat M."/>
            <person name="Lemcke K."/>
            <person name="Rieger M."/>
            <person name="Ansorge W."/>
            <person name="Unseld M."/>
            <person name="Fartmann B."/>
            <person name="Valle G."/>
            <person name="Bloecker H."/>
            <person name="Perez-Alonso M."/>
            <person name="Obermaier B."/>
            <person name="Delseny M."/>
            <person name="Boutry M."/>
            <person name="Grivell L.A."/>
            <person name="Mache R."/>
            <person name="Puigdomenech P."/>
            <person name="De Simone V."/>
            <person name="Choisne N."/>
            <person name="Artiguenave F."/>
            <person name="Robert C."/>
            <person name="Brottier P."/>
            <person name="Wincker P."/>
            <person name="Cattolico L."/>
            <person name="Weissenbach J."/>
            <person name="Saurin W."/>
            <person name="Quetier F."/>
            <person name="Schaefer M."/>
            <person name="Mueller-Auer S."/>
            <person name="Gabel C."/>
            <person name="Fuchs M."/>
            <person name="Benes V."/>
            <person name="Wurmbach E."/>
            <person name="Drzonek H."/>
            <person name="Erfle H."/>
            <person name="Jordan N."/>
            <person name="Bangert S."/>
            <person name="Wiedelmann R."/>
            <person name="Kranz H."/>
            <person name="Voss H."/>
            <person name="Holland R."/>
            <person name="Brandt P."/>
            <person name="Nyakatura G."/>
            <person name="Vezzi A."/>
            <person name="D'Angelo M."/>
            <person name="Pallavicini A."/>
            <person name="Toppo S."/>
            <person name="Simionati B."/>
            <person name="Conrad A."/>
            <person name="Hornischer K."/>
            <person name="Kauer G."/>
            <person name="Loehnert T.-H."/>
            <person name="Nordsiek G."/>
            <person name="Reichelt J."/>
            <person name="Scharfe M."/>
            <person name="Schoen O."/>
            <person name="Bargues M."/>
            <person name="Terol J."/>
            <person name="Climent J."/>
            <person name="Navarro P."/>
            <person name="Collado C."/>
            <person name="Perez-Perez A."/>
            <person name="Ottenwaelder B."/>
            <person name="Duchemin D."/>
            <person name="Cooke R."/>
            <person name="Laudie M."/>
            <person name="Berger-Llauro C."/>
            <person name="Purnelle B."/>
            <person name="Masuy D."/>
            <person name="de Haan M."/>
            <person name="Maarse A.C."/>
            <person name="Alcaraz J.-P."/>
            <person name="Cottet A."/>
            <person name="Casacuberta E."/>
            <person name="Monfort A."/>
            <person name="Argiriou A."/>
            <person name="Flores M."/>
            <person name="Liguori R."/>
            <person name="Vitale D."/>
            <person name="Mannhaupt G."/>
            <person name="Haase D."/>
            <person name="Schoof H."/>
            <person name="Rudd S."/>
            <person name="Zaccaria P."/>
            <person name="Mewes H.-W."/>
            <person name="Mayer K.F.X."/>
            <person name="Kaul S."/>
            <person name="Town C.D."/>
            <person name="Koo H.L."/>
            <person name="Tallon L.J."/>
            <person name="Jenkins J."/>
            <person name="Rooney T."/>
            <person name="Rizzo M."/>
            <person name="Walts A."/>
            <person name="Utterback T."/>
            <person name="Fujii C.Y."/>
            <person name="Shea T.P."/>
            <person name="Creasy T.H."/>
            <person name="Haas B."/>
            <person name="Maiti R."/>
            <person name="Wu D."/>
            <person name="Peterson J."/>
            <person name="Van Aken S."/>
            <person name="Pai G."/>
            <person name="Militscher J."/>
            <person name="Sellers P."/>
            <person name="Gill J.E."/>
            <person name="Feldblyum T.V."/>
            <person name="Preuss D."/>
            <person name="Lin X."/>
            <person name="Nierman W.C."/>
            <person name="Salzberg S.L."/>
            <person name="White O."/>
            <person name="Venter J.C."/>
            <person name="Fraser C.M."/>
            <person name="Kaneko T."/>
            <person name="Nakamura Y."/>
            <person name="Sato S."/>
            <person name="Kato T."/>
            <person name="Asamizu E."/>
            <person name="Sasamoto S."/>
            <person name="Kimura T."/>
            <person name="Idesawa K."/>
            <person name="Kawashima K."/>
            <person name="Kishida Y."/>
            <person name="Kiyokawa C."/>
            <person name="Kohara M."/>
            <person name="Matsumoto M."/>
            <person name="Matsuno A."/>
            <person name="Muraki A."/>
            <person name="Nakayama S."/>
            <person name="Nakazaki N."/>
            <person name="Shinpo S."/>
            <person name="Takeuchi C."/>
            <person name="Wada T."/>
            <person name="Watanabe A."/>
            <person name="Yamada M."/>
            <person name="Yasuda M."/>
            <person name="Tabata S."/>
        </authorList>
    </citation>
    <scope>NUCLEOTIDE SEQUENCE [LARGE SCALE GENOMIC DNA]</scope>
    <source>
        <strain>cv. Columbia</strain>
    </source>
</reference>
<reference key="2">
    <citation type="journal article" date="2017" name="Plant J.">
        <title>Araport11: a complete reannotation of the Arabidopsis thaliana reference genome.</title>
        <authorList>
            <person name="Cheng C.Y."/>
            <person name="Krishnakumar V."/>
            <person name="Chan A.P."/>
            <person name="Thibaud-Nissen F."/>
            <person name="Schobel S."/>
            <person name="Town C.D."/>
        </authorList>
    </citation>
    <scope>GENOME REANNOTATION</scope>
    <source>
        <strain>cv. Columbia</strain>
    </source>
</reference>
<reference key="3">
    <citation type="journal article" date="2003" name="Science">
        <title>Empirical analysis of transcriptional activity in the Arabidopsis genome.</title>
        <authorList>
            <person name="Yamada K."/>
            <person name="Lim J."/>
            <person name="Dale J.M."/>
            <person name="Chen H."/>
            <person name="Shinn P."/>
            <person name="Palm C.J."/>
            <person name="Southwick A.M."/>
            <person name="Wu H.C."/>
            <person name="Kim C.J."/>
            <person name="Nguyen M."/>
            <person name="Pham P.K."/>
            <person name="Cheuk R.F."/>
            <person name="Karlin-Newmann G."/>
            <person name="Liu S.X."/>
            <person name="Lam B."/>
            <person name="Sakano H."/>
            <person name="Wu T."/>
            <person name="Yu G."/>
            <person name="Miranda M."/>
            <person name="Quach H.L."/>
            <person name="Tripp M."/>
            <person name="Chang C.H."/>
            <person name="Lee J.M."/>
            <person name="Toriumi M.J."/>
            <person name="Chan M.M."/>
            <person name="Tang C.C."/>
            <person name="Onodera C.S."/>
            <person name="Deng J.M."/>
            <person name="Akiyama K."/>
            <person name="Ansari Y."/>
            <person name="Arakawa T."/>
            <person name="Banh J."/>
            <person name="Banno F."/>
            <person name="Bowser L."/>
            <person name="Brooks S.Y."/>
            <person name="Carninci P."/>
            <person name="Chao Q."/>
            <person name="Choy N."/>
            <person name="Enju A."/>
            <person name="Goldsmith A.D."/>
            <person name="Gurjal M."/>
            <person name="Hansen N.F."/>
            <person name="Hayashizaki Y."/>
            <person name="Johnson-Hopson C."/>
            <person name="Hsuan V.W."/>
            <person name="Iida K."/>
            <person name="Karnes M."/>
            <person name="Khan S."/>
            <person name="Koesema E."/>
            <person name="Ishida J."/>
            <person name="Jiang P.X."/>
            <person name="Jones T."/>
            <person name="Kawai J."/>
            <person name="Kamiya A."/>
            <person name="Meyers C."/>
            <person name="Nakajima M."/>
            <person name="Narusaka M."/>
            <person name="Seki M."/>
            <person name="Sakurai T."/>
            <person name="Satou M."/>
            <person name="Tamse R."/>
            <person name="Vaysberg M."/>
            <person name="Wallender E.K."/>
            <person name="Wong C."/>
            <person name="Yamamura Y."/>
            <person name="Yuan S."/>
            <person name="Shinozaki K."/>
            <person name="Davis R.W."/>
            <person name="Theologis A."/>
            <person name="Ecker J.R."/>
        </authorList>
    </citation>
    <scope>NUCLEOTIDE SEQUENCE [LARGE SCALE MRNA]</scope>
    <source>
        <strain>cv. Columbia</strain>
    </source>
</reference>
<reference key="4">
    <citation type="submission" date="2002-03" db="EMBL/GenBank/DDBJ databases">
        <title>Full-length cDNA from Arabidopsis thaliana.</title>
        <authorList>
            <person name="Brover V.V."/>
            <person name="Troukhan M.E."/>
            <person name="Alexandrov N.A."/>
            <person name="Lu Y.-P."/>
            <person name="Flavell R.B."/>
            <person name="Feldmann K.A."/>
        </authorList>
    </citation>
    <scope>NUCLEOTIDE SEQUENCE [LARGE SCALE MRNA]</scope>
</reference>
<reference key="5">
    <citation type="journal article" date="2008" name="Plant Cell">
        <title>Proteomic identification and characterization of a novel peroxisomal adenine nucleotide transporter supplying ATP for fatty acid beta-oxidation in soybean and Arabidopsis.</title>
        <authorList>
            <person name="Arai Y."/>
            <person name="Hayashi M."/>
            <person name="Nishimura M."/>
        </authorList>
    </citation>
    <scope>FUNCTION</scope>
    <scope>SUBCELLULAR LOCATION</scope>
    <scope>DEVELOPMENTAL STAGE</scope>
</reference>
<reference key="6">
    <citation type="journal article" date="2008" name="Plant Cell">
        <title>Peroxisomal ATP import is essential for seedling development in Arabidopsis thaliana.</title>
        <authorList>
            <person name="Linka N."/>
            <person name="Theodoulou F.L."/>
            <person name="Haslam R.P."/>
            <person name="Linka M."/>
            <person name="Napier J.A."/>
            <person name="Neuhaus H.E."/>
            <person name="Weber A.P."/>
        </authorList>
    </citation>
    <scope>FUNCTION</scope>
    <scope>SUBCELLULAR LOCATION</scope>
    <scope>BIOPHYSICOCHEMICAL PROPERTIES</scope>
    <scope>TISSUE SPECIFICITY</scope>
</reference>
<accession>Q9MA90</accession>
<accession>Q8L9D8</accession>
<gene>
    <name type="primary">PNC1</name>
    <name type="ordered locus">At3g05290</name>
    <name type="ORF">T12H1.26</name>
</gene>
<proteinExistence type="evidence at protein level"/>
<evidence type="ECO:0000255" key="1"/>
<evidence type="ECO:0000269" key="2">
    <source>
    </source>
</evidence>
<evidence type="ECO:0000269" key="3">
    <source>
    </source>
</evidence>
<evidence type="ECO:0000305" key="4"/>
<dbReference type="EMBL" id="AC009177">
    <property type="protein sequence ID" value="AAF27035.1"/>
    <property type="molecule type" value="Genomic_DNA"/>
</dbReference>
<dbReference type="EMBL" id="CP002686">
    <property type="protein sequence ID" value="AEE74216.1"/>
    <property type="molecule type" value="Genomic_DNA"/>
</dbReference>
<dbReference type="EMBL" id="AY048291">
    <property type="protein sequence ID" value="AAK82553.1"/>
    <property type="molecule type" value="mRNA"/>
</dbReference>
<dbReference type="EMBL" id="BT000838">
    <property type="protein sequence ID" value="AAN38675.1"/>
    <property type="molecule type" value="mRNA"/>
</dbReference>
<dbReference type="EMBL" id="AY088489">
    <property type="protein sequence ID" value="AAM66025.1"/>
    <property type="molecule type" value="mRNA"/>
</dbReference>
<dbReference type="RefSeq" id="NP_566251.1">
    <property type="nucleotide sequence ID" value="NM_111402.5"/>
</dbReference>
<dbReference type="SMR" id="Q9MA90"/>
<dbReference type="FunCoup" id="Q9MA90">
    <property type="interactions" value="561"/>
</dbReference>
<dbReference type="STRING" id="3702.Q9MA90"/>
<dbReference type="TCDB" id="2.A.29.20.3">
    <property type="family name" value="the mitochondrial carrier (mc) family"/>
</dbReference>
<dbReference type="PaxDb" id="3702-AT3G05290.1"/>
<dbReference type="ProteomicsDB" id="234879"/>
<dbReference type="EnsemblPlants" id="AT3G05290.1">
    <property type="protein sequence ID" value="AT3G05290.1"/>
    <property type="gene ID" value="AT3G05290"/>
</dbReference>
<dbReference type="GeneID" id="819693"/>
<dbReference type="Gramene" id="AT3G05290.1">
    <property type="protein sequence ID" value="AT3G05290.1"/>
    <property type="gene ID" value="AT3G05290"/>
</dbReference>
<dbReference type="KEGG" id="ath:AT3G05290"/>
<dbReference type="Araport" id="AT3G05290"/>
<dbReference type="TAIR" id="AT3G05290">
    <property type="gene designation" value="PNC1"/>
</dbReference>
<dbReference type="eggNOG" id="KOG0769">
    <property type="taxonomic scope" value="Eukaryota"/>
</dbReference>
<dbReference type="HOGENOM" id="CLU_015166_6_3_1"/>
<dbReference type="InParanoid" id="Q9MA90"/>
<dbReference type="OMA" id="PLEMINT"/>
<dbReference type="OrthoDB" id="446044at2759"/>
<dbReference type="PhylomeDB" id="Q9MA90"/>
<dbReference type="PRO" id="PR:Q9MA90"/>
<dbReference type="Proteomes" id="UP000006548">
    <property type="component" value="Chromosome 3"/>
</dbReference>
<dbReference type="ExpressionAtlas" id="Q9MA90">
    <property type="expression patterns" value="baseline and differential"/>
</dbReference>
<dbReference type="GO" id="GO:0005778">
    <property type="term" value="C:peroxisomal membrane"/>
    <property type="evidence" value="ECO:0007669"/>
    <property type="project" value="UniProtKB-SubCell"/>
</dbReference>
<dbReference type="GO" id="GO:0005777">
    <property type="term" value="C:peroxisome"/>
    <property type="evidence" value="ECO:0000314"/>
    <property type="project" value="TAIR"/>
</dbReference>
<dbReference type="GO" id="GO:0015217">
    <property type="term" value="F:ADP transmembrane transporter activity"/>
    <property type="evidence" value="ECO:0000314"/>
    <property type="project" value="TAIR"/>
</dbReference>
<dbReference type="GO" id="GO:0015297">
    <property type="term" value="F:antiporter activity"/>
    <property type="evidence" value="ECO:0007669"/>
    <property type="project" value="UniProtKB-KW"/>
</dbReference>
<dbReference type="GO" id="GO:0005347">
    <property type="term" value="F:ATP transmembrane transporter activity"/>
    <property type="evidence" value="ECO:0000314"/>
    <property type="project" value="TAIR"/>
</dbReference>
<dbReference type="GO" id="GO:0015866">
    <property type="term" value="P:ADP transport"/>
    <property type="evidence" value="ECO:0000314"/>
    <property type="project" value="TAIR"/>
</dbReference>
<dbReference type="GO" id="GO:0015867">
    <property type="term" value="P:ATP transport"/>
    <property type="evidence" value="ECO:0000314"/>
    <property type="project" value="TAIR"/>
</dbReference>
<dbReference type="GO" id="GO:0006635">
    <property type="term" value="P:fatty acid beta-oxidation"/>
    <property type="evidence" value="ECO:0000315"/>
    <property type="project" value="TAIR"/>
</dbReference>
<dbReference type="GO" id="GO:0080024">
    <property type="term" value="P:indolebutyric acid metabolic process"/>
    <property type="evidence" value="ECO:0000315"/>
    <property type="project" value="TAIR"/>
</dbReference>
<dbReference type="GO" id="GO:0090351">
    <property type="term" value="P:seedling development"/>
    <property type="evidence" value="ECO:0000315"/>
    <property type="project" value="UniProtKB"/>
</dbReference>
<dbReference type="FunFam" id="1.50.40.10:FF:000044">
    <property type="entry name" value="Peroxisomal adenine nucleotide carrier 1"/>
    <property type="match status" value="1"/>
</dbReference>
<dbReference type="Gene3D" id="1.50.40.10">
    <property type="entry name" value="Mitochondrial carrier domain"/>
    <property type="match status" value="1"/>
</dbReference>
<dbReference type="InterPro" id="IPR018108">
    <property type="entry name" value="Mitochondrial_sb/sol_carrier"/>
</dbReference>
<dbReference type="InterPro" id="IPR023395">
    <property type="entry name" value="Mt_carrier_dom_sf"/>
</dbReference>
<dbReference type="InterPro" id="IPR045900">
    <property type="entry name" value="Peroxisomal_Ade_carrier"/>
</dbReference>
<dbReference type="PANTHER" id="PTHR46650:SF4">
    <property type="entry name" value="PEROXISOMAL ADENINE NUCLEOTIDE CARRIER 1"/>
    <property type="match status" value="1"/>
</dbReference>
<dbReference type="PANTHER" id="PTHR46650">
    <property type="entry name" value="PEROXISOMAL ADENINE NUCLEOTIDE TRANSPORTER 1"/>
    <property type="match status" value="1"/>
</dbReference>
<dbReference type="Pfam" id="PF00153">
    <property type="entry name" value="Mito_carr"/>
    <property type="match status" value="3"/>
</dbReference>
<dbReference type="SUPFAM" id="SSF103506">
    <property type="entry name" value="Mitochondrial carrier"/>
    <property type="match status" value="1"/>
</dbReference>
<dbReference type="PROSITE" id="PS50920">
    <property type="entry name" value="SOLCAR"/>
    <property type="match status" value="3"/>
</dbReference>
<protein>
    <recommendedName>
        <fullName>Peroxisomal adenine nucleotide carrier 1</fullName>
        <shortName>AtPNC1</shortName>
    </recommendedName>
</protein>
<organism>
    <name type="scientific">Arabidopsis thaliana</name>
    <name type="common">Mouse-ear cress</name>
    <dbReference type="NCBI Taxonomy" id="3702"/>
    <lineage>
        <taxon>Eukaryota</taxon>
        <taxon>Viridiplantae</taxon>
        <taxon>Streptophyta</taxon>
        <taxon>Embryophyta</taxon>
        <taxon>Tracheophyta</taxon>
        <taxon>Spermatophyta</taxon>
        <taxon>Magnoliopsida</taxon>
        <taxon>eudicotyledons</taxon>
        <taxon>Gunneridae</taxon>
        <taxon>Pentapetalae</taxon>
        <taxon>rosids</taxon>
        <taxon>malvids</taxon>
        <taxon>Brassicales</taxon>
        <taxon>Brassicaceae</taxon>
        <taxon>Camelineae</taxon>
        <taxon>Arabidopsis</taxon>
    </lineage>
</organism>
<keyword id="KW-0050">Antiport</keyword>
<keyword id="KW-0472">Membrane</keyword>
<keyword id="KW-0576">Peroxisome</keyword>
<keyword id="KW-1185">Reference proteome</keyword>
<keyword id="KW-0677">Repeat</keyword>
<keyword id="KW-0812">Transmembrane</keyword>
<keyword id="KW-1133">Transmembrane helix</keyword>
<keyword id="KW-0813">Transport</keyword>
<comment type="function">
    <text evidence="2 3">Peroxisomal adenine nucleotide transporter catalyzing the counterexchange of ATP with AMP. ATP is needed by reactions that generate acyl-CoA for peroxisomal fatty acid beta-oxidation during postgerminative growth. Required for the beta-oxidation reactions involved in auxin biosynthesis and for the conversion of seed-reserved triacylglycerols into sucrose that is necessary for growth before the onset of photosynthesis.</text>
</comment>
<comment type="biophysicochemical properties">
    <kinetics>
        <KM evidence="3">83 uM for ATP</KM>
    </kinetics>
</comment>
<comment type="subcellular location">
    <subcellularLocation>
        <location evidence="2 3">Peroxisome membrane</location>
        <topology evidence="2 3">Multi-pass membrane protein</topology>
    </subcellularLocation>
</comment>
<comment type="tissue specificity">
    <text evidence="3">Expressed in stamens, pollen grains, seeds, leaves, cotyledons, roots, stems, flowers, hypocotyls and siliques.</text>
</comment>
<comment type="developmental stage">
    <text evidence="2">Expressed in the early seedling stage of post-germinative growth.</text>
</comment>
<comment type="similarity">
    <text evidence="4">Belongs to the mitochondrial carrier (TC 2.A.29) family.</text>
</comment>
<sequence>MGVDLESVSEATSGAIGSLLSTTILYPLDTCKSKFQAEVRARGQQKYRYLSDVMWEAISKGQVFSLYQGLGTKNFQSFISQFIYFYSYSYFKRVHSERTGSKSIGTKANLLIAAAAGACTSVLIQPLDTASSRMQTSEFGESKGLWKTLTEGSWADAFDGLGISLLLTSNPAIQYTVFDQLKQHLLKQKNAKAENGSSPVVLSAFMAFVLGAVSKSVATVLTYPAIRCKVMIQAADESKENETKKPRRRTRKTIPGVVYAIWRKEGMLGFFKGLQAQILKTVLSSALLLMIKEKITATTWILILAIRRTLFLTNTKGKLRSP</sequence>
<feature type="chain" id="PRO_0000420691" description="Peroxisomal adenine nucleotide carrier 1">
    <location>
        <begin position="1"/>
        <end position="322"/>
    </location>
</feature>
<feature type="transmembrane region" description="Helical; Name=1" evidence="1">
    <location>
        <begin position="8"/>
        <end position="28"/>
    </location>
</feature>
<feature type="transmembrane region" description="Helical; Name=2" evidence="1">
    <location>
        <begin position="104"/>
        <end position="124"/>
    </location>
</feature>
<feature type="transmembrane region" description="Helical; Name=3" evidence="1">
    <location>
        <begin position="158"/>
        <end position="178"/>
    </location>
</feature>
<feature type="transmembrane region" description="Helical; Name=4" evidence="1">
    <location>
        <begin position="201"/>
        <end position="221"/>
    </location>
</feature>
<feature type="transmembrane region" description="Helical; Name=5" evidence="1">
    <location>
        <begin position="254"/>
        <end position="274"/>
    </location>
</feature>
<feature type="transmembrane region" description="Helical; Name=6" evidence="1">
    <location>
        <begin position="286"/>
        <end position="306"/>
    </location>
</feature>
<feature type="repeat" description="Solcar 1">
    <location>
        <begin position="5"/>
        <end position="94"/>
    </location>
</feature>
<feature type="repeat" description="Solcar 2">
    <location>
        <begin position="104"/>
        <end position="184"/>
    </location>
</feature>
<feature type="repeat" description="Solcar 3">
    <location>
        <begin position="202"/>
        <end position="298"/>
    </location>
</feature>
<feature type="sequence conflict" description="In Ref. 4; AAM66025." evidence="4" ref="4">
    <original>Q</original>
    <variation>H</variation>
    <location>
        <position position="62"/>
    </location>
</feature>